<dbReference type="EMBL" id="AM040264">
    <property type="protein sequence ID" value="CAJ11936.1"/>
    <property type="molecule type" value="Genomic_DNA"/>
</dbReference>
<dbReference type="RefSeq" id="WP_002965045.1">
    <property type="nucleotide sequence ID" value="NZ_KN046823.1"/>
</dbReference>
<dbReference type="STRING" id="359391.BAB1_1980"/>
<dbReference type="KEGG" id="bmf:BAB1_1980"/>
<dbReference type="PATRIC" id="fig|359391.11.peg.1218"/>
<dbReference type="HOGENOM" id="CLU_106619_2_1_5"/>
<dbReference type="PhylomeDB" id="Q2YR89"/>
<dbReference type="Proteomes" id="UP000002719">
    <property type="component" value="Chromosome I"/>
</dbReference>
<dbReference type="HAMAP" id="MF_00489">
    <property type="entry name" value="UPF0178"/>
    <property type="match status" value="1"/>
</dbReference>
<dbReference type="InterPro" id="IPR003791">
    <property type="entry name" value="UPF0178"/>
</dbReference>
<dbReference type="NCBIfam" id="NF001095">
    <property type="entry name" value="PRK00124.1"/>
    <property type="match status" value="1"/>
</dbReference>
<dbReference type="PANTHER" id="PTHR35146">
    <property type="entry name" value="UPF0178 PROTEIN YAII"/>
    <property type="match status" value="1"/>
</dbReference>
<dbReference type="PANTHER" id="PTHR35146:SF1">
    <property type="entry name" value="UPF0178 PROTEIN YAII"/>
    <property type="match status" value="1"/>
</dbReference>
<dbReference type="Pfam" id="PF02639">
    <property type="entry name" value="DUF188"/>
    <property type="match status" value="1"/>
</dbReference>
<keyword id="KW-1185">Reference proteome</keyword>
<accession>Q2YR89</accession>
<protein>
    <recommendedName>
        <fullName evidence="1">UPF0178 protein BAB1_1980</fullName>
    </recommendedName>
</protein>
<organism>
    <name type="scientific">Brucella abortus (strain 2308)</name>
    <dbReference type="NCBI Taxonomy" id="359391"/>
    <lineage>
        <taxon>Bacteria</taxon>
        <taxon>Pseudomonadati</taxon>
        <taxon>Pseudomonadota</taxon>
        <taxon>Alphaproteobacteria</taxon>
        <taxon>Hyphomicrobiales</taxon>
        <taxon>Brucellaceae</taxon>
        <taxon>Brucella/Ochrobactrum group</taxon>
        <taxon>Brucella</taxon>
    </lineage>
</organism>
<proteinExistence type="inferred from homology"/>
<reference key="1">
    <citation type="journal article" date="2005" name="Infect. Immun.">
        <title>Whole-genome analyses of speciation events in pathogenic Brucellae.</title>
        <authorList>
            <person name="Chain P.S."/>
            <person name="Comerci D.J."/>
            <person name="Tolmasky M.E."/>
            <person name="Larimer F.W."/>
            <person name="Malfatti S.A."/>
            <person name="Vergez L.M."/>
            <person name="Aguero F."/>
            <person name="Land M.L."/>
            <person name="Ugalde R.A."/>
            <person name="Garcia E."/>
        </authorList>
    </citation>
    <scope>NUCLEOTIDE SEQUENCE [LARGE SCALE GENOMIC DNA]</scope>
    <source>
        <strain>2308</strain>
    </source>
</reference>
<feature type="chain" id="PRO_0000241809" description="UPF0178 protein BAB1_1980">
    <location>
        <begin position="1"/>
        <end position="161"/>
    </location>
</feature>
<evidence type="ECO:0000255" key="1">
    <source>
        <dbReference type="HAMAP-Rule" id="MF_00489"/>
    </source>
</evidence>
<sequence length="161" mass="17094">MENEPDTICILVDADACPVKAEIYRVAERHNLPVVIVANSFIAIPREAQRVERVVVSGNLDAADDWIAEHSRPGAVVVTADIPLASHALEKGASVIAPNGRIHTQSTIGNTLATRNLMDSLRSAGEVTGGPAPFAPKDRSAFLSALDLAIVRLKRAGFHAS</sequence>
<gene>
    <name type="ordered locus">BAB1_1980</name>
</gene>
<name>Y1980_BRUA2</name>
<comment type="similarity">
    <text evidence="1">Belongs to the UPF0178 family.</text>
</comment>